<sequence length="334" mass="36652">MGMKKNRPRRGSLAFSPRKRAKKLVPKIRSWPADKKVGLQAFPVYKAGTTHALLIENNPKSPNSSQEVFTPVTVLETPDVTVAGIRLYEKTTKGLKALTEVWAEQLDSDLGRKLTLAKKEEKKTVDALDAVLEKATEVRAIVHTNPKTTGIPKKKPEVVEIRIGGSSVAERLAYAKEILGKTLAISDVFEAGEIIDTLAITKGKGFQGSVKRWGIKVQFGKHQRKGVGRHTGSIGPWRPRRVMWTVPLPGQMGFHQRTEYNKRILKLGSEGAEITPKGGFLNYGAVKNGYVVVKGTVQGPAKRLVVLRGSVRAAEDKFGLPEIAYISTESKQGN</sequence>
<accession>Q6LX10</accession>
<protein>
    <recommendedName>
        <fullName evidence="1">Large ribosomal subunit protein uL3</fullName>
    </recommendedName>
    <alternativeName>
        <fullName evidence="3">50S ribosomal protein L3</fullName>
    </alternativeName>
</protein>
<comment type="function">
    <text evidence="1">One of the primary rRNA binding proteins, it binds directly near the 3'-end of the 23S rRNA, where it nucleates assembly of the 50S subunit.</text>
</comment>
<comment type="subunit">
    <text evidence="1">Part of the 50S ribosomal subunit. Forms a cluster with proteins L14 and L24e.</text>
</comment>
<comment type="similarity">
    <text evidence="1">Belongs to the universal ribosomal protein uL3 family.</text>
</comment>
<organism>
    <name type="scientific">Methanococcus maripaludis (strain DSM 14266 / JCM 13030 / NBRC 101832 / S2 / LL)</name>
    <dbReference type="NCBI Taxonomy" id="267377"/>
    <lineage>
        <taxon>Archaea</taxon>
        <taxon>Methanobacteriati</taxon>
        <taxon>Methanobacteriota</taxon>
        <taxon>Methanomada group</taxon>
        <taxon>Methanococci</taxon>
        <taxon>Methanococcales</taxon>
        <taxon>Methanococcaceae</taxon>
        <taxon>Methanococcus</taxon>
    </lineage>
</organism>
<proteinExistence type="inferred from homology"/>
<dbReference type="EMBL" id="BX950229">
    <property type="protein sequence ID" value="CAF31099.1"/>
    <property type="molecule type" value="Genomic_DNA"/>
</dbReference>
<dbReference type="RefSeq" id="WP_011171487.1">
    <property type="nucleotide sequence ID" value="NC_005791.1"/>
</dbReference>
<dbReference type="SMR" id="Q6LX10"/>
<dbReference type="STRING" id="267377.MMP1543"/>
<dbReference type="EnsemblBacteria" id="CAF31099">
    <property type="protein sequence ID" value="CAF31099"/>
    <property type="gene ID" value="MMP1543"/>
</dbReference>
<dbReference type="GeneID" id="2762758"/>
<dbReference type="KEGG" id="mmp:MMP1543"/>
<dbReference type="PATRIC" id="fig|267377.15.peg.1580"/>
<dbReference type="eggNOG" id="arCOG04070">
    <property type="taxonomic scope" value="Archaea"/>
</dbReference>
<dbReference type="HOGENOM" id="CLU_033361_2_0_2"/>
<dbReference type="OrthoDB" id="6121at2157"/>
<dbReference type="Proteomes" id="UP000000590">
    <property type="component" value="Chromosome"/>
</dbReference>
<dbReference type="GO" id="GO:0022625">
    <property type="term" value="C:cytosolic large ribosomal subunit"/>
    <property type="evidence" value="ECO:0007669"/>
    <property type="project" value="TreeGrafter"/>
</dbReference>
<dbReference type="GO" id="GO:0019843">
    <property type="term" value="F:rRNA binding"/>
    <property type="evidence" value="ECO:0007669"/>
    <property type="project" value="UniProtKB-UniRule"/>
</dbReference>
<dbReference type="GO" id="GO:0003735">
    <property type="term" value="F:structural constituent of ribosome"/>
    <property type="evidence" value="ECO:0007669"/>
    <property type="project" value="InterPro"/>
</dbReference>
<dbReference type="GO" id="GO:0006412">
    <property type="term" value="P:translation"/>
    <property type="evidence" value="ECO:0007669"/>
    <property type="project" value="UniProtKB-UniRule"/>
</dbReference>
<dbReference type="Gene3D" id="3.30.1430.10">
    <property type="match status" value="1"/>
</dbReference>
<dbReference type="Gene3D" id="4.10.960.10">
    <property type="entry name" value="Ribosomal protein L3, domain 3"/>
    <property type="match status" value="1"/>
</dbReference>
<dbReference type="Gene3D" id="2.40.30.10">
    <property type="entry name" value="Translation factors"/>
    <property type="match status" value="1"/>
</dbReference>
<dbReference type="HAMAP" id="MF_01325_A">
    <property type="entry name" value="Ribosomal_uL3_A"/>
    <property type="match status" value="1"/>
</dbReference>
<dbReference type="InterPro" id="IPR045077">
    <property type="entry name" value="L3_arc_euk"/>
</dbReference>
<dbReference type="InterPro" id="IPR044892">
    <property type="entry name" value="Ribosomal_L3_dom_3_arc_sf"/>
</dbReference>
<dbReference type="InterPro" id="IPR000597">
    <property type="entry name" value="Ribosomal_uL3"/>
</dbReference>
<dbReference type="InterPro" id="IPR019928">
    <property type="entry name" value="Ribosomal_uL3_arc"/>
</dbReference>
<dbReference type="InterPro" id="IPR019926">
    <property type="entry name" value="Ribosomal_uL3_CS"/>
</dbReference>
<dbReference type="InterPro" id="IPR009000">
    <property type="entry name" value="Transl_B-barrel_sf"/>
</dbReference>
<dbReference type="NCBIfam" id="TIGR03626">
    <property type="entry name" value="L3_arch"/>
    <property type="match status" value="1"/>
</dbReference>
<dbReference type="NCBIfam" id="NF003261">
    <property type="entry name" value="PRK04231.1"/>
    <property type="match status" value="1"/>
</dbReference>
<dbReference type="PANTHER" id="PTHR11363">
    <property type="entry name" value="60S RIBOSOMAL PROTEIN L3-RELATED"/>
    <property type="match status" value="1"/>
</dbReference>
<dbReference type="PANTHER" id="PTHR11363:SF5">
    <property type="entry name" value="LARGE RIBOSOMAL SUBUNIT PROTEIN UL3"/>
    <property type="match status" value="1"/>
</dbReference>
<dbReference type="Pfam" id="PF00297">
    <property type="entry name" value="Ribosomal_L3"/>
    <property type="match status" value="1"/>
</dbReference>
<dbReference type="SUPFAM" id="SSF50447">
    <property type="entry name" value="Translation proteins"/>
    <property type="match status" value="1"/>
</dbReference>
<dbReference type="PROSITE" id="PS00474">
    <property type="entry name" value="RIBOSOMAL_L3"/>
    <property type="match status" value="1"/>
</dbReference>
<gene>
    <name evidence="1" type="primary">rpl3</name>
    <name type="ordered locus">MMP1543</name>
</gene>
<name>RL3_METMP</name>
<reference key="1">
    <citation type="journal article" date="2004" name="J. Bacteriol.">
        <title>Complete genome sequence of the genetically tractable hydrogenotrophic methanogen Methanococcus maripaludis.</title>
        <authorList>
            <person name="Hendrickson E.L."/>
            <person name="Kaul R."/>
            <person name="Zhou Y."/>
            <person name="Bovee D."/>
            <person name="Chapman P."/>
            <person name="Chung J."/>
            <person name="Conway de Macario E."/>
            <person name="Dodsworth J.A."/>
            <person name="Gillett W."/>
            <person name="Graham D.E."/>
            <person name="Hackett M."/>
            <person name="Haydock A.K."/>
            <person name="Kang A."/>
            <person name="Land M.L."/>
            <person name="Levy R."/>
            <person name="Lie T.J."/>
            <person name="Major T.A."/>
            <person name="Moore B.C."/>
            <person name="Porat I."/>
            <person name="Palmeiri A."/>
            <person name="Rouse G."/>
            <person name="Saenphimmachak C."/>
            <person name="Soell D."/>
            <person name="Van Dien S."/>
            <person name="Wang T."/>
            <person name="Whitman W.B."/>
            <person name="Xia Q."/>
            <person name="Zhang Y."/>
            <person name="Larimer F.W."/>
            <person name="Olson M.V."/>
            <person name="Leigh J.A."/>
        </authorList>
    </citation>
    <scope>NUCLEOTIDE SEQUENCE [LARGE SCALE GENOMIC DNA]</scope>
    <source>
        <strain>DSM 14266 / JCM 13030 / NBRC 101832 / S2 / LL</strain>
    </source>
</reference>
<keyword id="KW-1185">Reference proteome</keyword>
<keyword id="KW-0687">Ribonucleoprotein</keyword>
<keyword id="KW-0689">Ribosomal protein</keyword>
<keyword id="KW-0694">RNA-binding</keyword>
<keyword id="KW-0699">rRNA-binding</keyword>
<evidence type="ECO:0000255" key="1">
    <source>
        <dbReference type="HAMAP-Rule" id="MF_01325"/>
    </source>
</evidence>
<evidence type="ECO:0000256" key="2">
    <source>
        <dbReference type="SAM" id="MobiDB-lite"/>
    </source>
</evidence>
<evidence type="ECO:0000305" key="3"/>
<feature type="chain" id="PRO_0000241439" description="Large ribosomal subunit protein uL3">
    <location>
        <begin position="1"/>
        <end position="334"/>
    </location>
</feature>
<feature type="region of interest" description="Disordered" evidence="2">
    <location>
        <begin position="1"/>
        <end position="21"/>
    </location>
</feature>
<feature type="compositionally biased region" description="Basic residues" evidence="2">
    <location>
        <begin position="1"/>
        <end position="10"/>
    </location>
</feature>